<reference key="1">
    <citation type="submission" date="2009-01" db="EMBL/GenBank/DDBJ databases">
        <title>Complete sequence of Chloroflexus sp. Y-400-fl.</title>
        <authorList>
            <consortium name="US DOE Joint Genome Institute"/>
            <person name="Lucas S."/>
            <person name="Copeland A."/>
            <person name="Lapidus A."/>
            <person name="Glavina del Rio T."/>
            <person name="Dalin E."/>
            <person name="Tice H."/>
            <person name="Bruce D."/>
            <person name="Goodwin L."/>
            <person name="Pitluck S."/>
            <person name="Sims D."/>
            <person name="Kiss H."/>
            <person name="Brettin T."/>
            <person name="Detter J.C."/>
            <person name="Han C."/>
            <person name="Larimer F."/>
            <person name="Land M."/>
            <person name="Hauser L."/>
            <person name="Kyrpides N."/>
            <person name="Ovchinnikova G."/>
            <person name="Bryant D.A."/>
            <person name="Richardson P."/>
        </authorList>
    </citation>
    <scope>NUCLEOTIDE SEQUENCE [LARGE SCALE GENOMIC DNA]</scope>
    <source>
        <strain>ATCC 29364 / DSM 637 / Y-400-fl</strain>
    </source>
</reference>
<dbReference type="EMBL" id="CP001364">
    <property type="protein sequence ID" value="ACM53750.1"/>
    <property type="molecule type" value="Genomic_DNA"/>
</dbReference>
<dbReference type="SMR" id="B9LI30"/>
<dbReference type="KEGG" id="chl:Chy400_2355"/>
<dbReference type="HOGENOM" id="CLU_062853_0_0_0"/>
<dbReference type="OrthoDB" id="9803740at2"/>
<dbReference type="GO" id="GO:0015934">
    <property type="term" value="C:large ribosomal subunit"/>
    <property type="evidence" value="ECO:0007669"/>
    <property type="project" value="InterPro"/>
</dbReference>
<dbReference type="GO" id="GO:0019843">
    <property type="term" value="F:rRNA binding"/>
    <property type="evidence" value="ECO:0007669"/>
    <property type="project" value="UniProtKB-UniRule"/>
</dbReference>
<dbReference type="GO" id="GO:0003735">
    <property type="term" value="F:structural constituent of ribosome"/>
    <property type="evidence" value="ECO:0007669"/>
    <property type="project" value="InterPro"/>
</dbReference>
<dbReference type="GO" id="GO:0000049">
    <property type="term" value="F:tRNA binding"/>
    <property type="evidence" value="ECO:0007669"/>
    <property type="project" value="UniProtKB-KW"/>
</dbReference>
<dbReference type="GO" id="GO:0006417">
    <property type="term" value="P:regulation of translation"/>
    <property type="evidence" value="ECO:0007669"/>
    <property type="project" value="UniProtKB-KW"/>
</dbReference>
<dbReference type="GO" id="GO:0006412">
    <property type="term" value="P:translation"/>
    <property type="evidence" value="ECO:0007669"/>
    <property type="project" value="UniProtKB-UniRule"/>
</dbReference>
<dbReference type="CDD" id="cd00403">
    <property type="entry name" value="Ribosomal_L1"/>
    <property type="match status" value="1"/>
</dbReference>
<dbReference type="FunFam" id="3.40.50.790:FF:000001">
    <property type="entry name" value="50S ribosomal protein L1"/>
    <property type="match status" value="1"/>
</dbReference>
<dbReference type="Gene3D" id="3.30.190.20">
    <property type="match status" value="1"/>
</dbReference>
<dbReference type="Gene3D" id="3.40.50.790">
    <property type="match status" value="1"/>
</dbReference>
<dbReference type="HAMAP" id="MF_01318_B">
    <property type="entry name" value="Ribosomal_uL1_B"/>
    <property type="match status" value="1"/>
</dbReference>
<dbReference type="InterPro" id="IPR005878">
    <property type="entry name" value="Ribosom_uL1_bac-type"/>
</dbReference>
<dbReference type="InterPro" id="IPR002143">
    <property type="entry name" value="Ribosomal_uL1"/>
</dbReference>
<dbReference type="InterPro" id="IPR023674">
    <property type="entry name" value="Ribosomal_uL1-like"/>
</dbReference>
<dbReference type="InterPro" id="IPR028364">
    <property type="entry name" value="Ribosomal_uL1/biogenesis"/>
</dbReference>
<dbReference type="InterPro" id="IPR016095">
    <property type="entry name" value="Ribosomal_uL1_3-a/b-sand"/>
</dbReference>
<dbReference type="InterPro" id="IPR023673">
    <property type="entry name" value="Ribosomal_uL1_CS"/>
</dbReference>
<dbReference type="NCBIfam" id="TIGR01169">
    <property type="entry name" value="rplA_bact"/>
    <property type="match status" value="1"/>
</dbReference>
<dbReference type="PANTHER" id="PTHR36427">
    <property type="entry name" value="54S RIBOSOMAL PROTEIN L1, MITOCHONDRIAL"/>
    <property type="match status" value="1"/>
</dbReference>
<dbReference type="PANTHER" id="PTHR36427:SF3">
    <property type="entry name" value="LARGE RIBOSOMAL SUBUNIT PROTEIN UL1M"/>
    <property type="match status" value="1"/>
</dbReference>
<dbReference type="Pfam" id="PF00687">
    <property type="entry name" value="Ribosomal_L1"/>
    <property type="match status" value="1"/>
</dbReference>
<dbReference type="PIRSF" id="PIRSF002155">
    <property type="entry name" value="Ribosomal_L1"/>
    <property type="match status" value="1"/>
</dbReference>
<dbReference type="SUPFAM" id="SSF56808">
    <property type="entry name" value="Ribosomal protein L1"/>
    <property type="match status" value="1"/>
</dbReference>
<dbReference type="PROSITE" id="PS01199">
    <property type="entry name" value="RIBOSOMAL_L1"/>
    <property type="match status" value="1"/>
</dbReference>
<accession>B9LI30</accession>
<sequence>MPKHGKKYLAALAKVDRTRLYSPTEALALVKETSYTKFDGTVEAHLRLGIDPRHADQNIRTTVALPHGTGKTVRVLVFAQGEAVQAALDAGADYAGSDDLIARIDRENFFDFDVAIATPDMMGKVGRIGRKLGPRGLMPNPKSGTIVPAADLARTIREVKGGRVEIRNDKTGILHVAIGKVSFTPQQLSENFVALMDAVKAAKPSGAKGTYIRSVTLTSTMGPGVPVDPVAAQNLKA</sequence>
<proteinExistence type="inferred from homology"/>
<protein>
    <recommendedName>
        <fullName evidence="1">Large ribosomal subunit protein uL1</fullName>
    </recommendedName>
    <alternativeName>
        <fullName evidence="2">50S ribosomal protein L1</fullName>
    </alternativeName>
</protein>
<keyword id="KW-0678">Repressor</keyword>
<keyword id="KW-0687">Ribonucleoprotein</keyword>
<keyword id="KW-0689">Ribosomal protein</keyword>
<keyword id="KW-0694">RNA-binding</keyword>
<keyword id="KW-0699">rRNA-binding</keyword>
<keyword id="KW-0810">Translation regulation</keyword>
<keyword id="KW-0820">tRNA-binding</keyword>
<name>RL1_CHLSY</name>
<organism>
    <name type="scientific">Chloroflexus aurantiacus (strain ATCC 29364 / DSM 637 / Y-400-fl)</name>
    <dbReference type="NCBI Taxonomy" id="480224"/>
    <lineage>
        <taxon>Bacteria</taxon>
        <taxon>Bacillati</taxon>
        <taxon>Chloroflexota</taxon>
        <taxon>Chloroflexia</taxon>
        <taxon>Chloroflexales</taxon>
        <taxon>Chloroflexineae</taxon>
        <taxon>Chloroflexaceae</taxon>
        <taxon>Chloroflexus</taxon>
    </lineage>
</organism>
<evidence type="ECO:0000255" key="1">
    <source>
        <dbReference type="HAMAP-Rule" id="MF_01318"/>
    </source>
</evidence>
<evidence type="ECO:0000305" key="2"/>
<feature type="chain" id="PRO_1000165670" description="Large ribosomal subunit protein uL1">
    <location>
        <begin position="1"/>
        <end position="237"/>
    </location>
</feature>
<gene>
    <name evidence="1" type="primary">rplA</name>
    <name type="ordered locus">Chy400_2355</name>
</gene>
<comment type="function">
    <text evidence="1">Binds directly to 23S rRNA. The L1 stalk is quite mobile in the ribosome, and is involved in E site tRNA release.</text>
</comment>
<comment type="function">
    <text evidence="1">Protein L1 is also a translational repressor protein, it controls the translation of the L11 operon by binding to its mRNA.</text>
</comment>
<comment type="subunit">
    <text evidence="1">Part of the 50S ribosomal subunit.</text>
</comment>
<comment type="similarity">
    <text evidence="1">Belongs to the universal ribosomal protein uL1 family.</text>
</comment>